<organism>
    <name type="scientific">Thermoplasma acidophilum (strain ATCC 25905 / DSM 1728 / JCM 9062 / NBRC 15155 / AMRC-C165)</name>
    <dbReference type="NCBI Taxonomy" id="273075"/>
    <lineage>
        <taxon>Archaea</taxon>
        <taxon>Methanobacteriati</taxon>
        <taxon>Thermoplasmatota</taxon>
        <taxon>Thermoplasmata</taxon>
        <taxon>Thermoplasmatales</taxon>
        <taxon>Thermoplasmataceae</taxon>
        <taxon>Thermoplasma</taxon>
    </lineage>
</organism>
<reference key="1">
    <citation type="journal article" date="2000" name="Nature">
        <title>The genome sequence of the thermoacidophilic scavenger Thermoplasma acidophilum.</title>
        <authorList>
            <person name="Ruepp A."/>
            <person name="Graml W."/>
            <person name="Santos-Martinez M.-L."/>
            <person name="Koretke K.K."/>
            <person name="Volker C."/>
            <person name="Mewes H.-W."/>
            <person name="Frishman D."/>
            <person name="Stocker S."/>
            <person name="Lupas A.N."/>
            <person name="Baumeister W."/>
        </authorList>
    </citation>
    <scope>NUCLEOTIDE SEQUENCE [LARGE SCALE GENOMIC DNA]</scope>
    <source>
        <strain>ATCC 25905 / DSM 1728 / JCM 9062 / NBRC 15155 / AMRC-C165</strain>
    </source>
</reference>
<gene>
    <name type="primary">tbp</name>
    <name type="ordered locus">Ta0199</name>
</gene>
<comment type="function">
    <text evidence="1">General factor that plays a role in the activation of archaeal genes transcribed by RNA polymerase. Binds specifically to the TATA box promoter element which lies close to the position of transcription initiation (By similarity).</text>
</comment>
<comment type="similarity">
    <text evidence="2">Belongs to the TBP family.</text>
</comment>
<protein>
    <recommendedName>
        <fullName>TATA-box-binding protein</fullName>
    </recommendedName>
    <alternativeName>
        <fullName>Box A-binding protein</fullName>
        <shortName>BAP</shortName>
    </alternativeName>
    <alternativeName>
        <fullName>TATA sequence-binding protein</fullName>
        <shortName>TBP</shortName>
    </alternativeName>
    <alternativeName>
        <fullName>TATA-box factor</fullName>
    </alternativeName>
</protein>
<proteinExistence type="inferred from homology"/>
<keyword id="KW-0238">DNA-binding</keyword>
<keyword id="KW-1185">Reference proteome</keyword>
<keyword id="KW-0677">Repeat</keyword>
<keyword id="KW-0804">Transcription</keyword>
<keyword id="KW-0805">Transcription regulation</keyword>
<evidence type="ECO:0000250" key="1"/>
<evidence type="ECO:0000305" key="2"/>
<accession>Q9HLM8</accession>
<name>TBP_THEAC</name>
<dbReference type="EMBL" id="AL445063">
    <property type="protein sequence ID" value="CAC11345.1"/>
    <property type="molecule type" value="Genomic_DNA"/>
</dbReference>
<dbReference type="RefSeq" id="WP_010900626.1">
    <property type="nucleotide sequence ID" value="NC_002578.1"/>
</dbReference>
<dbReference type="SMR" id="Q9HLM8"/>
<dbReference type="FunCoup" id="Q9HLM8">
    <property type="interactions" value="138"/>
</dbReference>
<dbReference type="STRING" id="273075.gene:9571415"/>
<dbReference type="PaxDb" id="273075-Ta0199"/>
<dbReference type="EnsemblBacteria" id="CAC11345">
    <property type="protein sequence ID" value="CAC11345"/>
    <property type="gene ID" value="CAC11345"/>
</dbReference>
<dbReference type="KEGG" id="tac:Ta0199"/>
<dbReference type="eggNOG" id="arCOG01764">
    <property type="taxonomic scope" value="Archaea"/>
</dbReference>
<dbReference type="HOGENOM" id="CLU_060161_4_3_2"/>
<dbReference type="InParanoid" id="Q9HLM8"/>
<dbReference type="OrthoDB" id="350539at2157"/>
<dbReference type="Proteomes" id="UP000001024">
    <property type="component" value="Chromosome"/>
</dbReference>
<dbReference type="GO" id="GO:0003677">
    <property type="term" value="F:DNA binding"/>
    <property type="evidence" value="ECO:0007669"/>
    <property type="project" value="UniProtKB-KW"/>
</dbReference>
<dbReference type="GO" id="GO:0003700">
    <property type="term" value="F:DNA-binding transcription factor activity"/>
    <property type="evidence" value="ECO:0007669"/>
    <property type="project" value="UniProtKB-UniRule"/>
</dbReference>
<dbReference type="GO" id="GO:0006352">
    <property type="term" value="P:DNA-templated transcription initiation"/>
    <property type="evidence" value="ECO:0007669"/>
    <property type="project" value="InterPro"/>
</dbReference>
<dbReference type="CDD" id="cd04518">
    <property type="entry name" value="TBP_archaea"/>
    <property type="match status" value="1"/>
</dbReference>
<dbReference type="FunFam" id="3.30.310.10:FF:000007">
    <property type="entry name" value="TATA-box-binding protein"/>
    <property type="match status" value="1"/>
</dbReference>
<dbReference type="FunFam" id="3.30.310.10:FF:000010">
    <property type="entry name" value="TATA-box-binding protein"/>
    <property type="match status" value="1"/>
</dbReference>
<dbReference type="Gene3D" id="3.30.310.10">
    <property type="entry name" value="TATA-Binding Protein"/>
    <property type="match status" value="2"/>
</dbReference>
<dbReference type="HAMAP" id="MF_00408">
    <property type="entry name" value="TATA_bind_prot_arch"/>
    <property type="match status" value="1"/>
</dbReference>
<dbReference type="InterPro" id="IPR000814">
    <property type="entry name" value="TBP"/>
</dbReference>
<dbReference type="InterPro" id="IPR033711">
    <property type="entry name" value="TBP_archaea"/>
</dbReference>
<dbReference type="InterPro" id="IPR030491">
    <property type="entry name" value="TBP_CS"/>
</dbReference>
<dbReference type="InterPro" id="IPR012295">
    <property type="entry name" value="TBP_dom_sf"/>
</dbReference>
<dbReference type="NCBIfam" id="NF001593">
    <property type="entry name" value="PRK00394.1-2"/>
    <property type="match status" value="1"/>
</dbReference>
<dbReference type="NCBIfam" id="NF001597">
    <property type="entry name" value="PRK00394.2-2"/>
    <property type="match status" value="1"/>
</dbReference>
<dbReference type="NCBIfam" id="NF001598">
    <property type="entry name" value="PRK00394.2-3"/>
    <property type="match status" value="1"/>
</dbReference>
<dbReference type="PANTHER" id="PTHR10126">
    <property type="entry name" value="TATA-BOX BINDING PROTEIN"/>
    <property type="match status" value="1"/>
</dbReference>
<dbReference type="Pfam" id="PF00352">
    <property type="entry name" value="TBP"/>
    <property type="match status" value="2"/>
</dbReference>
<dbReference type="PRINTS" id="PR00686">
    <property type="entry name" value="TIFACTORIID"/>
</dbReference>
<dbReference type="SUPFAM" id="SSF55945">
    <property type="entry name" value="TATA-box binding protein-like"/>
    <property type="match status" value="2"/>
</dbReference>
<dbReference type="PROSITE" id="PS00351">
    <property type="entry name" value="TFIID"/>
    <property type="match status" value="1"/>
</dbReference>
<sequence>MSEREKITIENIVASTSLAEHLDLSRIALALDGSEYEPEQFPGLIYRLQEPKTAVLIFRSGKVNCTGAKNIEDVKRTIKIIIDKLKAADIEVYDDPQIIVQNIVAVYDLESELNLTDIAMSLGLENVEYEPEQFPGLVYRVEEPRVVLLLFGSGKVVCTGAKEESEIEQAVIKVKKELQKVGLI</sequence>
<feature type="chain" id="PRO_0000154028" description="TATA-box-binding protein">
    <location>
        <begin position="1"/>
        <end position="184"/>
    </location>
</feature>
<feature type="repeat" description="1">
    <location>
        <begin position="9"/>
        <end position="85"/>
    </location>
</feature>
<feature type="repeat" description="2">
    <location>
        <begin position="100"/>
        <end position="178"/>
    </location>
</feature>